<sequence length="243" mass="27141">MRYLVDTHTHTIVSGHAYTTFLENVQEASNIGLKVLGTTDHGPSMPGGPNLFYFNNFKVMPRKLKGVTLLHGCEANIIDFKGMLDIPDFTQKKLDVIIASLHDVCIRPGSVEENTEALINVMENPYVDILGHIGNPSFPINEEVVVKKAKEKNVLIEINNGSFVSRKGSEETCKKVANLCKKHKVNIIVGSDSHVCFQIGRFPKADNMLKEIGMPEELIINNEENKILKYLKNKGKLKDLNLD</sequence>
<organism>
    <name type="scientific">Clostridium botulinum (strain Hall / ATCC 3502 / NCTC 13319 / Type A)</name>
    <dbReference type="NCBI Taxonomy" id="441771"/>
    <lineage>
        <taxon>Bacteria</taxon>
        <taxon>Bacillati</taxon>
        <taxon>Bacillota</taxon>
        <taxon>Clostridia</taxon>
        <taxon>Eubacteriales</taxon>
        <taxon>Clostridiaceae</taxon>
        <taxon>Clostridium</taxon>
    </lineage>
</organism>
<name>Y3379_CLOBH</name>
<dbReference type="EC" id="3.1.3.-"/>
<dbReference type="EMBL" id="CP000727">
    <property type="protein sequence ID" value="ABS38229.1"/>
    <property type="molecule type" value="Genomic_DNA"/>
</dbReference>
<dbReference type="EMBL" id="AM412317">
    <property type="protein sequence ID" value="CAL84938.1"/>
    <property type="molecule type" value="Genomic_DNA"/>
</dbReference>
<dbReference type="RefSeq" id="WP_012048308.1">
    <property type="nucleotide sequence ID" value="NC_009698.1"/>
</dbReference>
<dbReference type="RefSeq" id="YP_001255861.1">
    <property type="nucleotide sequence ID" value="NC_009495.1"/>
</dbReference>
<dbReference type="RefSeq" id="YP_001389102.1">
    <property type="nucleotide sequence ID" value="NC_009698.1"/>
</dbReference>
<dbReference type="SMR" id="A5I7A4"/>
<dbReference type="GeneID" id="5186912"/>
<dbReference type="KEGG" id="cbh:CLC_3322"/>
<dbReference type="KEGG" id="cbo:CBO3379"/>
<dbReference type="PATRIC" id="fig|413999.7.peg.3353"/>
<dbReference type="HOGENOM" id="CLU_061999_0_1_9"/>
<dbReference type="PRO" id="PR:A5I7A4"/>
<dbReference type="Proteomes" id="UP000001986">
    <property type="component" value="Chromosome"/>
</dbReference>
<dbReference type="GO" id="GO:0005829">
    <property type="term" value="C:cytosol"/>
    <property type="evidence" value="ECO:0000318"/>
    <property type="project" value="GO_Central"/>
</dbReference>
<dbReference type="GO" id="GO:0016791">
    <property type="term" value="F:phosphatase activity"/>
    <property type="evidence" value="ECO:0007669"/>
    <property type="project" value="UniProtKB-UniRule"/>
</dbReference>
<dbReference type="GO" id="GO:0042578">
    <property type="term" value="F:phosphoric ester hydrolase activity"/>
    <property type="evidence" value="ECO:0000318"/>
    <property type="project" value="GO_Central"/>
</dbReference>
<dbReference type="GO" id="GO:0008270">
    <property type="term" value="F:zinc ion binding"/>
    <property type="evidence" value="ECO:0000318"/>
    <property type="project" value="GO_Central"/>
</dbReference>
<dbReference type="CDD" id="cd07437">
    <property type="entry name" value="PHP_HisPPase_Ycdx_like"/>
    <property type="match status" value="1"/>
</dbReference>
<dbReference type="Gene3D" id="3.20.20.140">
    <property type="entry name" value="Metal-dependent hydrolases"/>
    <property type="match status" value="1"/>
</dbReference>
<dbReference type="InterPro" id="IPR023710">
    <property type="entry name" value="Phosphatase_YcdX_put"/>
</dbReference>
<dbReference type="InterPro" id="IPR004013">
    <property type="entry name" value="PHP_dom"/>
</dbReference>
<dbReference type="InterPro" id="IPR050243">
    <property type="entry name" value="PHP_phosphatase"/>
</dbReference>
<dbReference type="InterPro" id="IPR003141">
    <property type="entry name" value="Pol/His_phosphatase_N"/>
</dbReference>
<dbReference type="InterPro" id="IPR016195">
    <property type="entry name" value="Pol/histidinol_Pase-like"/>
</dbReference>
<dbReference type="NCBIfam" id="NF006702">
    <property type="entry name" value="PRK09248.1"/>
    <property type="match status" value="1"/>
</dbReference>
<dbReference type="PANTHER" id="PTHR36928">
    <property type="entry name" value="PHOSPHATASE YCDX-RELATED"/>
    <property type="match status" value="1"/>
</dbReference>
<dbReference type="PANTHER" id="PTHR36928:SF1">
    <property type="entry name" value="PHOSPHATASE YCDX-RELATED"/>
    <property type="match status" value="1"/>
</dbReference>
<dbReference type="Pfam" id="PF02811">
    <property type="entry name" value="PHP"/>
    <property type="match status" value="1"/>
</dbReference>
<dbReference type="SMART" id="SM00481">
    <property type="entry name" value="POLIIIAc"/>
    <property type="match status" value="1"/>
</dbReference>
<dbReference type="SUPFAM" id="SSF89550">
    <property type="entry name" value="PHP domain-like"/>
    <property type="match status" value="1"/>
</dbReference>
<evidence type="ECO:0000250" key="1"/>
<evidence type="ECO:0000305" key="2"/>
<keyword id="KW-0378">Hydrolase</keyword>
<keyword id="KW-0479">Metal-binding</keyword>
<keyword id="KW-1185">Reference proteome</keyword>
<keyword id="KW-0862">Zinc</keyword>
<accession>A5I7A4</accession>
<accession>A7G8I7</accession>
<proteinExistence type="inferred from homology"/>
<protein>
    <recommendedName>
        <fullName>Probable phosphatase CBO3379/CLC_3322</fullName>
        <ecNumber>3.1.3.-</ecNumber>
    </recommendedName>
</protein>
<comment type="cofactor">
    <cofactor evidence="1">
        <name>Zn(2+)</name>
        <dbReference type="ChEBI" id="CHEBI:29105"/>
    </cofactor>
    <text evidence="1">Binds 3 Zn(2+) ions per subunit.</text>
</comment>
<comment type="similarity">
    <text evidence="2">Belongs to the PHP family.</text>
</comment>
<feature type="chain" id="PRO_1000069013" description="Probable phosphatase CBO3379/CLC_3322">
    <location>
        <begin position="1"/>
        <end position="243"/>
    </location>
</feature>
<feature type="binding site" evidence="1">
    <location>
        <position position="8"/>
    </location>
    <ligand>
        <name>Zn(2+)</name>
        <dbReference type="ChEBI" id="CHEBI:29105"/>
        <label>1</label>
    </ligand>
</feature>
<feature type="binding site" evidence="1">
    <location>
        <position position="10"/>
    </location>
    <ligand>
        <name>Zn(2+)</name>
        <dbReference type="ChEBI" id="CHEBI:29105"/>
        <label>1</label>
    </ligand>
</feature>
<feature type="binding site" evidence="1">
    <location>
        <position position="16"/>
    </location>
    <ligand>
        <name>Zn(2+)</name>
        <dbReference type="ChEBI" id="CHEBI:29105"/>
        <label>2</label>
    </ligand>
</feature>
<feature type="binding site" evidence="1">
    <location>
        <position position="41"/>
    </location>
    <ligand>
        <name>Zn(2+)</name>
        <dbReference type="ChEBI" id="CHEBI:29105"/>
        <label>2</label>
    </ligand>
</feature>
<feature type="binding site" evidence="1">
    <location>
        <position position="74"/>
    </location>
    <ligand>
        <name>Zn(2+)</name>
        <dbReference type="ChEBI" id="CHEBI:29105"/>
        <label>1</label>
    </ligand>
</feature>
<feature type="binding site" evidence="1">
    <location>
        <position position="74"/>
    </location>
    <ligand>
        <name>Zn(2+)</name>
        <dbReference type="ChEBI" id="CHEBI:29105"/>
        <label>3</label>
    </ligand>
</feature>
<feature type="binding site" evidence="1">
    <location>
        <position position="102"/>
    </location>
    <ligand>
        <name>Zn(2+)</name>
        <dbReference type="ChEBI" id="CHEBI:29105"/>
        <label>3</label>
    </ligand>
</feature>
<feature type="binding site" evidence="1">
    <location>
        <position position="132"/>
    </location>
    <ligand>
        <name>Zn(2+)</name>
        <dbReference type="ChEBI" id="CHEBI:29105"/>
        <label>3</label>
    </ligand>
</feature>
<feature type="binding site" evidence="1">
    <location>
        <position position="192"/>
    </location>
    <ligand>
        <name>Zn(2+)</name>
        <dbReference type="ChEBI" id="CHEBI:29105"/>
        <label>1</label>
    </ligand>
</feature>
<feature type="binding site" evidence="1">
    <location>
        <position position="194"/>
    </location>
    <ligand>
        <name>Zn(2+)</name>
        <dbReference type="ChEBI" id="CHEBI:29105"/>
        <label>2</label>
    </ligand>
</feature>
<gene>
    <name type="ordered locus">CBO3379</name>
    <name type="ordered locus">CLC_3322</name>
</gene>
<reference key="1">
    <citation type="journal article" date="2007" name="Genome Res.">
        <title>Genome sequence of a proteolytic (Group I) Clostridium botulinum strain Hall A and comparative analysis of the clostridial genomes.</title>
        <authorList>
            <person name="Sebaihia M."/>
            <person name="Peck M.W."/>
            <person name="Minton N.P."/>
            <person name="Thomson N.R."/>
            <person name="Holden M.T.G."/>
            <person name="Mitchell W.J."/>
            <person name="Carter A.T."/>
            <person name="Bentley S.D."/>
            <person name="Mason D.R."/>
            <person name="Crossman L."/>
            <person name="Paul C.J."/>
            <person name="Ivens A."/>
            <person name="Wells-Bennik M.H.J."/>
            <person name="Davis I.J."/>
            <person name="Cerdeno-Tarraga A.M."/>
            <person name="Churcher C."/>
            <person name="Quail M.A."/>
            <person name="Chillingworth T."/>
            <person name="Feltwell T."/>
            <person name="Fraser A."/>
            <person name="Goodhead I."/>
            <person name="Hance Z."/>
            <person name="Jagels K."/>
            <person name="Larke N."/>
            <person name="Maddison M."/>
            <person name="Moule S."/>
            <person name="Mungall K."/>
            <person name="Norbertczak H."/>
            <person name="Rabbinowitsch E."/>
            <person name="Sanders M."/>
            <person name="Simmonds M."/>
            <person name="White B."/>
            <person name="Whithead S."/>
            <person name="Parkhill J."/>
        </authorList>
    </citation>
    <scope>NUCLEOTIDE SEQUENCE [LARGE SCALE GENOMIC DNA]</scope>
    <source>
        <strain>Hall / ATCC 3502 / NCTC 13319 / Type A</strain>
    </source>
</reference>
<reference key="2">
    <citation type="journal article" date="2007" name="PLoS ONE">
        <title>Analysis of the neurotoxin complex genes in Clostridium botulinum A1-A4 and B1 strains: BoNT/A3, /Ba4 and /B1 clusters are located within plasmids.</title>
        <authorList>
            <person name="Smith T.J."/>
            <person name="Hill K.K."/>
            <person name="Foley B.T."/>
            <person name="Detter J.C."/>
            <person name="Munk A.C."/>
            <person name="Bruce D.C."/>
            <person name="Doggett N.A."/>
            <person name="Smith L.A."/>
            <person name="Marks J.D."/>
            <person name="Xie G."/>
            <person name="Brettin T.S."/>
        </authorList>
    </citation>
    <scope>NUCLEOTIDE SEQUENCE [LARGE SCALE GENOMIC DNA]</scope>
    <source>
        <strain>Hall / ATCC 3502 / NCTC 13319 / Type A</strain>
    </source>
</reference>